<organism>
    <name type="scientific">Shewanella woodyi (strain ATCC 51908 / MS32)</name>
    <dbReference type="NCBI Taxonomy" id="392500"/>
    <lineage>
        <taxon>Bacteria</taxon>
        <taxon>Pseudomonadati</taxon>
        <taxon>Pseudomonadota</taxon>
        <taxon>Gammaproteobacteria</taxon>
        <taxon>Alteromonadales</taxon>
        <taxon>Shewanellaceae</taxon>
        <taxon>Shewanella</taxon>
    </lineage>
</organism>
<gene>
    <name evidence="1" type="primary">proB</name>
    <name type="ordered locus">Swoo_3599</name>
</gene>
<feature type="chain" id="PRO_1000125263" description="Glutamate 5-kinase">
    <location>
        <begin position="1"/>
        <end position="372"/>
    </location>
</feature>
<feature type="domain" description="PUA" evidence="1">
    <location>
        <begin position="280"/>
        <end position="358"/>
    </location>
</feature>
<feature type="binding site" evidence="1">
    <location>
        <position position="14"/>
    </location>
    <ligand>
        <name>ATP</name>
        <dbReference type="ChEBI" id="CHEBI:30616"/>
    </ligand>
</feature>
<feature type="binding site" evidence="1">
    <location>
        <position position="54"/>
    </location>
    <ligand>
        <name>substrate</name>
    </ligand>
</feature>
<feature type="binding site" evidence="1">
    <location>
        <position position="141"/>
    </location>
    <ligand>
        <name>substrate</name>
    </ligand>
</feature>
<feature type="binding site" evidence="1">
    <location>
        <position position="153"/>
    </location>
    <ligand>
        <name>substrate</name>
    </ligand>
</feature>
<feature type="binding site" evidence="1">
    <location>
        <begin position="173"/>
        <end position="174"/>
    </location>
    <ligand>
        <name>ATP</name>
        <dbReference type="ChEBI" id="CHEBI:30616"/>
    </ligand>
</feature>
<feature type="binding site" evidence="1">
    <location>
        <begin position="215"/>
        <end position="221"/>
    </location>
    <ligand>
        <name>ATP</name>
        <dbReference type="ChEBI" id="CHEBI:30616"/>
    </ligand>
</feature>
<proteinExistence type="inferred from homology"/>
<evidence type="ECO:0000255" key="1">
    <source>
        <dbReference type="HAMAP-Rule" id="MF_00456"/>
    </source>
</evidence>
<sequence length="372" mass="39799">MNLSEIGYRRVVVKLGTSVLTSGSKQLDKAHMVELARQMSALMKAGVEVVLCTSGAIAAGREHLGYPKLADTVANKQLLAAVGQSQLILAWSQLFSIYGLHVGQLLLTQADLHDRERYLNARDSLNALLNNGIIPIINENDAVATNEIKVGDNDNLSARAALLCHADLLILLTDQQGLFDSDPRSNPDAKLIKQVVNIDDSLRQLAGGAVSGLGTGGMATKLEAADIARRAGIEVVIASGHRRQVILNAVCKEDVGTHFTALENPLESRKQWILAGQAAKGKLVLDVGAIKAVTEKGRSLLSKGVVSVIGEFDRGTTLQLIDSDGRECARGISRYSAGDLNKIVGKHSDEIESLLGYDYGDAVVHRNDMVVL</sequence>
<comment type="function">
    <text evidence="1">Catalyzes the transfer of a phosphate group to glutamate to form L-glutamate 5-phosphate.</text>
</comment>
<comment type="catalytic activity">
    <reaction evidence="1">
        <text>L-glutamate + ATP = L-glutamyl 5-phosphate + ADP</text>
        <dbReference type="Rhea" id="RHEA:14877"/>
        <dbReference type="ChEBI" id="CHEBI:29985"/>
        <dbReference type="ChEBI" id="CHEBI:30616"/>
        <dbReference type="ChEBI" id="CHEBI:58274"/>
        <dbReference type="ChEBI" id="CHEBI:456216"/>
        <dbReference type="EC" id="2.7.2.11"/>
    </reaction>
</comment>
<comment type="pathway">
    <text evidence="1">Amino-acid biosynthesis; L-proline biosynthesis; L-glutamate 5-semialdehyde from L-glutamate: step 1/2.</text>
</comment>
<comment type="subcellular location">
    <subcellularLocation>
        <location evidence="1">Cytoplasm</location>
    </subcellularLocation>
</comment>
<comment type="similarity">
    <text evidence="1">Belongs to the glutamate 5-kinase family.</text>
</comment>
<protein>
    <recommendedName>
        <fullName evidence="1">Glutamate 5-kinase</fullName>
        <ecNumber evidence="1">2.7.2.11</ecNumber>
    </recommendedName>
    <alternativeName>
        <fullName evidence="1">Gamma-glutamyl kinase</fullName>
        <shortName evidence="1">GK</shortName>
    </alternativeName>
</protein>
<name>PROB_SHEWM</name>
<accession>B1KD28</accession>
<dbReference type="EC" id="2.7.2.11" evidence="1"/>
<dbReference type="EMBL" id="CP000961">
    <property type="protein sequence ID" value="ACA87863.1"/>
    <property type="molecule type" value="Genomic_DNA"/>
</dbReference>
<dbReference type="RefSeq" id="WP_012326196.1">
    <property type="nucleotide sequence ID" value="NC_010506.1"/>
</dbReference>
<dbReference type="SMR" id="B1KD28"/>
<dbReference type="STRING" id="392500.Swoo_3599"/>
<dbReference type="KEGG" id="swd:Swoo_3599"/>
<dbReference type="eggNOG" id="COG0263">
    <property type="taxonomic scope" value="Bacteria"/>
</dbReference>
<dbReference type="HOGENOM" id="CLU_025400_2_0_6"/>
<dbReference type="UniPathway" id="UPA00098">
    <property type="reaction ID" value="UER00359"/>
</dbReference>
<dbReference type="Proteomes" id="UP000002168">
    <property type="component" value="Chromosome"/>
</dbReference>
<dbReference type="GO" id="GO:0005829">
    <property type="term" value="C:cytosol"/>
    <property type="evidence" value="ECO:0007669"/>
    <property type="project" value="TreeGrafter"/>
</dbReference>
<dbReference type="GO" id="GO:0005524">
    <property type="term" value="F:ATP binding"/>
    <property type="evidence" value="ECO:0007669"/>
    <property type="project" value="UniProtKB-KW"/>
</dbReference>
<dbReference type="GO" id="GO:0004349">
    <property type="term" value="F:glutamate 5-kinase activity"/>
    <property type="evidence" value="ECO:0007669"/>
    <property type="project" value="UniProtKB-UniRule"/>
</dbReference>
<dbReference type="GO" id="GO:0003723">
    <property type="term" value="F:RNA binding"/>
    <property type="evidence" value="ECO:0007669"/>
    <property type="project" value="InterPro"/>
</dbReference>
<dbReference type="GO" id="GO:0055129">
    <property type="term" value="P:L-proline biosynthetic process"/>
    <property type="evidence" value="ECO:0007669"/>
    <property type="project" value="UniProtKB-UniRule"/>
</dbReference>
<dbReference type="CDD" id="cd04242">
    <property type="entry name" value="AAK_G5K_ProB"/>
    <property type="match status" value="1"/>
</dbReference>
<dbReference type="CDD" id="cd21157">
    <property type="entry name" value="PUA_G5K"/>
    <property type="match status" value="1"/>
</dbReference>
<dbReference type="FunFam" id="3.40.1160.10:FF:000006">
    <property type="entry name" value="Glutamate 5-kinase"/>
    <property type="match status" value="1"/>
</dbReference>
<dbReference type="Gene3D" id="3.40.1160.10">
    <property type="entry name" value="Acetylglutamate kinase-like"/>
    <property type="match status" value="2"/>
</dbReference>
<dbReference type="Gene3D" id="2.30.130.10">
    <property type="entry name" value="PUA domain"/>
    <property type="match status" value="1"/>
</dbReference>
<dbReference type="HAMAP" id="MF_00456">
    <property type="entry name" value="ProB"/>
    <property type="match status" value="1"/>
</dbReference>
<dbReference type="InterPro" id="IPR036393">
    <property type="entry name" value="AceGlu_kinase-like_sf"/>
</dbReference>
<dbReference type="InterPro" id="IPR001048">
    <property type="entry name" value="Asp/Glu/Uridylate_kinase"/>
</dbReference>
<dbReference type="InterPro" id="IPR041739">
    <property type="entry name" value="G5K_ProB"/>
</dbReference>
<dbReference type="InterPro" id="IPR001057">
    <property type="entry name" value="Glu/AcGlu_kinase"/>
</dbReference>
<dbReference type="InterPro" id="IPR011529">
    <property type="entry name" value="Glu_5kinase"/>
</dbReference>
<dbReference type="InterPro" id="IPR005715">
    <property type="entry name" value="Glu_5kinase/COase_Synthase"/>
</dbReference>
<dbReference type="InterPro" id="IPR019797">
    <property type="entry name" value="Glutamate_5-kinase_CS"/>
</dbReference>
<dbReference type="InterPro" id="IPR002478">
    <property type="entry name" value="PUA"/>
</dbReference>
<dbReference type="InterPro" id="IPR015947">
    <property type="entry name" value="PUA-like_sf"/>
</dbReference>
<dbReference type="InterPro" id="IPR036974">
    <property type="entry name" value="PUA_sf"/>
</dbReference>
<dbReference type="NCBIfam" id="TIGR01027">
    <property type="entry name" value="proB"/>
    <property type="match status" value="1"/>
</dbReference>
<dbReference type="PANTHER" id="PTHR43654">
    <property type="entry name" value="GLUTAMATE 5-KINASE"/>
    <property type="match status" value="1"/>
</dbReference>
<dbReference type="PANTHER" id="PTHR43654:SF1">
    <property type="entry name" value="ISOPENTENYL PHOSPHATE KINASE"/>
    <property type="match status" value="1"/>
</dbReference>
<dbReference type="Pfam" id="PF00696">
    <property type="entry name" value="AA_kinase"/>
    <property type="match status" value="1"/>
</dbReference>
<dbReference type="Pfam" id="PF01472">
    <property type="entry name" value="PUA"/>
    <property type="match status" value="1"/>
</dbReference>
<dbReference type="PIRSF" id="PIRSF000729">
    <property type="entry name" value="GK"/>
    <property type="match status" value="1"/>
</dbReference>
<dbReference type="PRINTS" id="PR00474">
    <property type="entry name" value="GLU5KINASE"/>
</dbReference>
<dbReference type="SMART" id="SM00359">
    <property type="entry name" value="PUA"/>
    <property type="match status" value="1"/>
</dbReference>
<dbReference type="SUPFAM" id="SSF53633">
    <property type="entry name" value="Carbamate kinase-like"/>
    <property type="match status" value="1"/>
</dbReference>
<dbReference type="SUPFAM" id="SSF88697">
    <property type="entry name" value="PUA domain-like"/>
    <property type="match status" value="1"/>
</dbReference>
<dbReference type="PROSITE" id="PS00902">
    <property type="entry name" value="GLUTAMATE_5_KINASE"/>
    <property type="match status" value="1"/>
</dbReference>
<dbReference type="PROSITE" id="PS50890">
    <property type="entry name" value="PUA"/>
    <property type="match status" value="1"/>
</dbReference>
<keyword id="KW-0028">Amino-acid biosynthesis</keyword>
<keyword id="KW-0067">ATP-binding</keyword>
<keyword id="KW-0963">Cytoplasm</keyword>
<keyword id="KW-0418">Kinase</keyword>
<keyword id="KW-0547">Nucleotide-binding</keyword>
<keyword id="KW-0641">Proline biosynthesis</keyword>
<keyword id="KW-1185">Reference proteome</keyword>
<keyword id="KW-0808">Transferase</keyword>
<reference key="1">
    <citation type="submission" date="2008-02" db="EMBL/GenBank/DDBJ databases">
        <title>Complete sequence of Shewanella woodyi ATCC 51908.</title>
        <authorList>
            <consortium name="US DOE Joint Genome Institute"/>
            <person name="Copeland A."/>
            <person name="Lucas S."/>
            <person name="Lapidus A."/>
            <person name="Glavina del Rio T."/>
            <person name="Dalin E."/>
            <person name="Tice H."/>
            <person name="Bruce D."/>
            <person name="Goodwin L."/>
            <person name="Pitluck S."/>
            <person name="Sims D."/>
            <person name="Brettin T."/>
            <person name="Detter J.C."/>
            <person name="Han C."/>
            <person name="Kuske C.R."/>
            <person name="Schmutz J."/>
            <person name="Larimer F."/>
            <person name="Land M."/>
            <person name="Hauser L."/>
            <person name="Kyrpides N."/>
            <person name="Lykidis A."/>
            <person name="Zhao J.-S."/>
            <person name="Richardson P."/>
        </authorList>
    </citation>
    <scope>NUCLEOTIDE SEQUENCE [LARGE SCALE GENOMIC DNA]</scope>
    <source>
        <strain>ATCC 51908 / MS32</strain>
    </source>
</reference>